<reference key="1">
    <citation type="submission" date="2009-07" db="EMBL/GenBank/DDBJ databases">
        <title>Complete sequence of Pectobacterium carotovorum subsp. carotovorum PC1.</title>
        <authorList>
            <consortium name="US DOE Joint Genome Institute"/>
            <person name="Lucas S."/>
            <person name="Copeland A."/>
            <person name="Lapidus A."/>
            <person name="Glavina del Rio T."/>
            <person name="Tice H."/>
            <person name="Bruce D."/>
            <person name="Goodwin L."/>
            <person name="Pitluck S."/>
            <person name="Munk A.C."/>
            <person name="Brettin T."/>
            <person name="Detter J.C."/>
            <person name="Han C."/>
            <person name="Tapia R."/>
            <person name="Larimer F."/>
            <person name="Land M."/>
            <person name="Hauser L."/>
            <person name="Kyrpides N."/>
            <person name="Mikhailova N."/>
            <person name="Balakrishnan V."/>
            <person name="Glasner J."/>
            <person name="Perna N.T."/>
        </authorList>
    </citation>
    <scope>NUCLEOTIDE SEQUENCE [LARGE SCALE GENOMIC DNA]</scope>
    <source>
        <strain>PC1</strain>
    </source>
</reference>
<gene>
    <name evidence="1" type="primary">lpxB</name>
    <name type="ordered locus">PC1_0954</name>
</gene>
<feature type="chain" id="PRO_1000205845" description="Lipid-A-disaccharide synthase">
    <location>
        <begin position="1"/>
        <end position="383"/>
    </location>
</feature>
<organism>
    <name type="scientific">Pectobacterium carotovorum subsp. carotovorum (strain PC1)</name>
    <dbReference type="NCBI Taxonomy" id="561230"/>
    <lineage>
        <taxon>Bacteria</taxon>
        <taxon>Pseudomonadati</taxon>
        <taxon>Pseudomonadota</taxon>
        <taxon>Gammaproteobacteria</taxon>
        <taxon>Enterobacterales</taxon>
        <taxon>Pectobacteriaceae</taxon>
        <taxon>Pectobacterium</taxon>
    </lineage>
</organism>
<comment type="function">
    <text evidence="1">Condensation of UDP-2,3-diacylglucosamine and 2,3-diacylglucosamine-1-phosphate to form lipid A disaccharide, a precursor of lipid A, a phosphorylated glycolipid that anchors the lipopolysaccharide to the outer membrane of the cell.</text>
</comment>
<comment type="catalytic activity">
    <reaction evidence="1">
        <text>2-N,3-O-bis[(3R)-3-hydroxytetradecanoyl]-alpha-D-glucosaminyl 1-phosphate + UDP-2-N,3-O-bis[(3R)-3-hydroxytetradecanoyl]-alpha-D-glucosamine = lipid A disaccharide (E. coli) + UDP + H(+)</text>
        <dbReference type="Rhea" id="RHEA:22668"/>
        <dbReference type="ChEBI" id="CHEBI:15378"/>
        <dbReference type="ChEBI" id="CHEBI:57957"/>
        <dbReference type="ChEBI" id="CHEBI:58223"/>
        <dbReference type="ChEBI" id="CHEBI:58466"/>
        <dbReference type="ChEBI" id="CHEBI:78847"/>
    </reaction>
</comment>
<comment type="catalytic activity">
    <reaction evidence="1">
        <text>a lipid X + a UDP-2-N,3-O-bis[(3R)-3-hydroxyacyl]-alpha-D-glucosamine = a lipid A disaccharide + UDP + H(+)</text>
        <dbReference type="Rhea" id="RHEA:67828"/>
        <dbReference type="ChEBI" id="CHEBI:15378"/>
        <dbReference type="ChEBI" id="CHEBI:58223"/>
        <dbReference type="ChEBI" id="CHEBI:137748"/>
        <dbReference type="ChEBI" id="CHEBI:176338"/>
        <dbReference type="ChEBI" id="CHEBI:176343"/>
        <dbReference type="EC" id="2.4.1.182"/>
    </reaction>
</comment>
<comment type="pathway">
    <text evidence="1">Glycolipid biosynthesis; lipid IV(A) biosynthesis; lipid IV(A) from (3R)-3-hydroxytetradecanoyl-[acyl-carrier-protein] and UDP-N-acetyl-alpha-D-glucosamine: step 5/6.</text>
</comment>
<comment type="similarity">
    <text evidence="1">Belongs to the LpxB family.</text>
</comment>
<name>LPXB_PECCP</name>
<keyword id="KW-0328">Glycosyltransferase</keyword>
<keyword id="KW-0441">Lipid A biosynthesis</keyword>
<keyword id="KW-0444">Lipid biosynthesis</keyword>
<keyword id="KW-0443">Lipid metabolism</keyword>
<keyword id="KW-0808">Transferase</keyword>
<protein>
    <recommendedName>
        <fullName evidence="1">Lipid-A-disaccharide synthase</fullName>
        <ecNumber evidence="1">2.4.1.182</ecNumber>
    </recommendedName>
</protein>
<accession>C6DAJ6</accession>
<evidence type="ECO:0000255" key="1">
    <source>
        <dbReference type="HAMAP-Rule" id="MF_00392"/>
    </source>
</evidence>
<sequence>MSSRPLTIGLVAGETSGDILGAGLIRSLKEKVPDARFVGVAGPRMQAEGCEAWYEMEELAVMGIVEVLGRLPRLLKIRRDLTQRFSELQPDVFVGIDAPDFNITLEGNLKQRGINTIHYVSPSVWAWRQKRVFKIGKATNLVLAFLPFEKAFYDRFNVPCRFIGHTMADAMPLHPDKQAARATLGIAPEAHCLALLPGSRNAEVEMLSADFLKTAVLLREHFPDLEIVVPLVNSKRREQFEQIKSSVAPDLRVHLLDGQAREAMIASDAALLASGTAALECMLAKCPMVVGYRMKPFTFWLAQRLVKTQWVSLPNLLAGRELVTELLQTDCTPDKLAAALLPLFADSDKTAALRTTFVDLHQQIRCNADEQAAQAVLELVKPR</sequence>
<dbReference type="EC" id="2.4.1.182" evidence="1"/>
<dbReference type="EMBL" id="CP001657">
    <property type="protein sequence ID" value="ACT12004.1"/>
    <property type="molecule type" value="Genomic_DNA"/>
</dbReference>
<dbReference type="RefSeq" id="WP_012773642.1">
    <property type="nucleotide sequence ID" value="NC_012917.1"/>
</dbReference>
<dbReference type="SMR" id="C6DAJ6"/>
<dbReference type="STRING" id="561230.PC1_0954"/>
<dbReference type="CAZy" id="GT19">
    <property type="family name" value="Glycosyltransferase Family 19"/>
</dbReference>
<dbReference type="KEGG" id="pct:PC1_0954"/>
<dbReference type="eggNOG" id="COG0763">
    <property type="taxonomic scope" value="Bacteria"/>
</dbReference>
<dbReference type="HOGENOM" id="CLU_036577_3_0_6"/>
<dbReference type="OrthoDB" id="9801642at2"/>
<dbReference type="UniPathway" id="UPA00359">
    <property type="reaction ID" value="UER00481"/>
</dbReference>
<dbReference type="Proteomes" id="UP000002736">
    <property type="component" value="Chromosome"/>
</dbReference>
<dbReference type="GO" id="GO:0016020">
    <property type="term" value="C:membrane"/>
    <property type="evidence" value="ECO:0007669"/>
    <property type="project" value="GOC"/>
</dbReference>
<dbReference type="GO" id="GO:0008915">
    <property type="term" value="F:lipid-A-disaccharide synthase activity"/>
    <property type="evidence" value="ECO:0007669"/>
    <property type="project" value="UniProtKB-UniRule"/>
</dbReference>
<dbReference type="GO" id="GO:0005543">
    <property type="term" value="F:phospholipid binding"/>
    <property type="evidence" value="ECO:0007669"/>
    <property type="project" value="TreeGrafter"/>
</dbReference>
<dbReference type="GO" id="GO:0009245">
    <property type="term" value="P:lipid A biosynthetic process"/>
    <property type="evidence" value="ECO:0007669"/>
    <property type="project" value="UniProtKB-UniRule"/>
</dbReference>
<dbReference type="CDD" id="cd01635">
    <property type="entry name" value="Glycosyltransferase_GTB-type"/>
    <property type="match status" value="1"/>
</dbReference>
<dbReference type="HAMAP" id="MF_00392">
    <property type="entry name" value="LpxB"/>
    <property type="match status" value="1"/>
</dbReference>
<dbReference type="InterPro" id="IPR003835">
    <property type="entry name" value="Glyco_trans_19"/>
</dbReference>
<dbReference type="NCBIfam" id="TIGR00215">
    <property type="entry name" value="lpxB"/>
    <property type="match status" value="1"/>
</dbReference>
<dbReference type="PANTHER" id="PTHR30372">
    <property type="entry name" value="LIPID-A-DISACCHARIDE SYNTHASE"/>
    <property type="match status" value="1"/>
</dbReference>
<dbReference type="PANTHER" id="PTHR30372:SF4">
    <property type="entry name" value="LIPID-A-DISACCHARIDE SYNTHASE, MITOCHONDRIAL-RELATED"/>
    <property type="match status" value="1"/>
</dbReference>
<dbReference type="Pfam" id="PF02684">
    <property type="entry name" value="LpxB"/>
    <property type="match status" value="1"/>
</dbReference>
<dbReference type="SUPFAM" id="SSF53756">
    <property type="entry name" value="UDP-Glycosyltransferase/glycogen phosphorylase"/>
    <property type="match status" value="1"/>
</dbReference>
<proteinExistence type="inferred from homology"/>